<evidence type="ECO:0000255" key="1">
    <source>
        <dbReference type="HAMAP-Rule" id="MF_02113"/>
    </source>
</evidence>
<evidence type="ECO:0000305" key="2"/>
<gene>
    <name evidence="1" type="primary">prcB</name>
    <name type="ordered locus">Francci3_2627</name>
</gene>
<protein>
    <recommendedName>
        <fullName evidence="1">Proteasome subunit beta</fullName>
        <ecNumber evidence="1">3.4.25.1</ecNumber>
    </recommendedName>
    <alternativeName>
        <fullName evidence="1">20S proteasome beta subunit</fullName>
    </alternativeName>
    <alternativeName>
        <fullName evidence="1">Proteasome core protein PrcB</fullName>
    </alternativeName>
</protein>
<feature type="propeptide" id="PRO_0000397506" description="Removed in mature form; by autocatalysis" evidence="1">
    <location>
        <begin position="1"/>
        <end position="52"/>
    </location>
</feature>
<feature type="chain" id="PRO_0000397507" description="Proteasome subunit beta">
    <location>
        <begin position="53"/>
        <end position="274"/>
    </location>
</feature>
<feature type="active site" description="Nucleophile" evidence="1">
    <location>
        <position position="53"/>
    </location>
</feature>
<proteinExistence type="inferred from homology"/>
<organism>
    <name type="scientific">Frankia casuarinae (strain DSM 45818 / CECT 9043 / HFP020203 / CcI3)</name>
    <dbReference type="NCBI Taxonomy" id="106370"/>
    <lineage>
        <taxon>Bacteria</taxon>
        <taxon>Bacillati</taxon>
        <taxon>Actinomycetota</taxon>
        <taxon>Actinomycetes</taxon>
        <taxon>Frankiales</taxon>
        <taxon>Frankiaceae</taxon>
        <taxon>Frankia</taxon>
    </lineage>
</organism>
<dbReference type="EC" id="3.4.25.1" evidence="1"/>
<dbReference type="EMBL" id="CP000249">
    <property type="protein sequence ID" value="ABD11989.1"/>
    <property type="status" value="ALT_INIT"/>
    <property type="molecule type" value="Genomic_DNA"/>
</dbReference>
<dbReference type="SMR" id="Q2J9Q3"/>
<dbReference type="STRING" id="106370.Francci3_2627"/>
<dbReference type="MEROPS" id="T01.005"/>
<dbReference type="KEGG" id="fra:Francci3_2627"/>
<dbReference type="eggNOG" id="COG0638">
    <property type="taxonomic scope" value="Bacteria"/>
</dbReference>
<dbReference type="HOGENOM" id="CLU_035750_2_0_11"/>
<dbReference type="UniPathway" id="UPA00997"/>
<dbReference type="Proteomes" id="UP000001937">
    <property type="component" value="Chromosome"/>
</dbReference>
<dbReference type="GO" id="GO:0005737">
    <property type="term" value="C:cytoplasm"/>
    <property type="evidence" value="ECO:0007669"/>
    <property type="project" value="UniProtKB-SubCell"/>
</dbReference>
<dbReference type="GO" id="GO:0019774">
    <property type="term" value="C:proteasome core complex, beta-subunit complex"/>
    <property type="evidence" value="ECO:0007669"/>
    <property type="project" value="UniProtKB-UniRule"/>
</dbReference>
<dbReference type="GO" id="GO:0004298">
    <property type="term" value="F:threonine-type endopeptidase activity"/>
    <property type="evidence" value="ECO:0007669"/>
    <property type="project" value="UniProtKB-UniRule"/>
</dbReference>
<dbReference type="GO" id="GO:0019941">
    <property type="term" value="P:modification-dependent protein catabolic process"/>
    <property type="evidence" value="ECO:0007669"/>
    <property type="project" value="UniProtKB-UniRule"/>
</dbReference>
<dbReference type="GO" id="GO:0010498">
    <property type="term" value="P:proteasomal protein catabolic process"/>
    <property type="evidence" value="ECO:0007669"/>
    <property type="project" value="UniProtKB-UniRule"/>
</dbReference>
<dbReference type="CDD" id="cd01906">
    <property type="entry name" value="proteasome_protease_HslV"/>
    <property type="match status" value="1"/>
</dbReference>
<dbReference type="Gene3D" id="3.60.20.10">
    <property type="entry name" value="Glutamine Phosphoribosylpyrophosphate, subunit 1, domain 1"/>
    <property type="match status" value="1"/>
</dbReference>
<dbReference type="HAMAP" id="MF_02113_B">
    <property type="entry name" value="Proteasome_B_B"/>
    <property type="match status" value="1"/>
</dbReference>
<dbReference type="InterPro" id="IPR029055">
    <property type="entry name" value="Ntn_hydrolases_N"/>
</dbReference>
<dbReference type="InterPro" id="IPR001353">
    <property type="entry name" value="Proteasome_sua/b"/>
</dbReference>
<dbReference type="InterPro" id="IPR023333">
    <property type="entry name" value="Proteasome_suB-type"/>
</dbReference>
<dbReference type="InterPro" id="IPR022483">
    <property type="entry name" value="PSB_actinobac"/>
</dbReference>
<dbReference type="NCBIfam" id="TIGR03690">
    <property type="entry name" value="20S_bact_beta"/>
    <property type="match status" value="1"/>
</dbReference>
<dbReference type="PANTHER" id="PTHR32194:SF0">
    <property type="entry name" value="ATP-DEPENDENT PROTEASE SUBUNIT HSLV"/>
    <property type="match status" value="1"/>
</dbReference>
<dbReference type="PANTHER" id="PTHR32194">
    <property type="entry name" value="METALLOPROTEASE TLDD"/>
    <property type="match status" value="1"/>
</dbReference>
<dbReference type="Pfam" id="PF00227">
    <property type="entry name" value="Proteasome"/>
    <property type="match status" value="1"/>
</dbReference>
<dbReference type="SUPFAM" id="SSF56235">
    <property type="entry name" value="N-terminal nucleophile aminohydrolases (Ntn hydrolases)"/>
    <property type="match status" value="1"/>
</dbReference>
<dbReference type="PROSITE" id="PS51476">
    <property type="entry name" value="PROTEASOME_BETA_2"/>
    <property type="match status" value="1"/>
</dbReference>
<accession>Q2J9Q3</accession>
<sequence>MADPLGAAGRLPAVFMTPGTSSFADFLSRSAPHLLPGARSGLPGPVTEVAHGTTIVAVAFPGGVIMAGDRRATQGHMIAQRDVEKVHHADDYSCVGYAGTAGVGAELIRLFQVELEHYEKIEGSTLSLDAKANRLAAMVKGNLPMALQGLAVVPLFAGYDLDTGKGRIFSYDIAAAKSEERTYESIGSGSVFAKGSLKKRFRSDLSQDDAVRISVEALYDAADDDSATGGPDVIRKLYPIVAVVTADGYRRYADDEIEPVVTAIIADRSTNSGG</sequence>
<comment type="function">
    <text evidence="1">Component of the proteasome core, a large protease complex with broad specificity involved in protein degradation.</text>
</comment>
<comment type="catalytic activity">
    <reaction evidence="1">
        <text>Cleavage of peptide bonds with very broad specificity.</text>
        <dbReference type="EC" id="3.4.25.1"/>
    </reaction>
</comment>
<comment type="activity regulation">
    <text evidence="1">The formation of the proteasomal ATPase ARC-20S proteasome complex, likely via the docking of the C-termini of ARC into the intersubunit pockets in the alpha-rings, may trigger opening of the gate for substrate entry. Interconversion between the open-gate and close-gate conformations leads to a dynamic regulation of the 20S proteasome proteolysis activity.</text>
</comment>
<comment type="pathway">
    <text evidence="1">Protein degradation; proteasomal Pup-dependent pathway.</text>
</comment>
<comment type="subunit">
    <text evidence="1">The 20S proteasome core is composed of 14 alpha and 14 beta subunits that assemble into four stacked heptameric rings, resulting in a barrel-shaped structure. The two inner rings, each composed of seven catalytic beta subunits, are sandwiched by two outer rings, each composed of seven alpha subunits. The catalytic chamber with the active sites is on the inside of the barrel. Has a gated structure, the ends of the cylinder being occluded by the N-termini of the alpha-subunits. Is capped by the proteasome-associated ATPase, ARC.</text>
</comment>
<comment type="subcellular location">
    <subcellularLocation>
        <location evidence="1">Cytoplasm</location>
    </subcellularLocation>
</comment>
<comment type="similarity">
    <text evidence="1">Belongs to the peptidase T1B family.</text>
</comment>
<comment type="sequence caution" evidence="2">
    <conflict type="erroneous initiation">
        <sequence resource="EMBL-CDS" id="ABD11989"/>
    </conflict>
    <text>Extended N-terminus.</text>
</comment>
<keyword id="KW-0068">Autocatalytic cleavage</keyword>
<keyword id="KW-0963">Cytoplasm</keyword>
<keyword id="KW-0378">Hydrolase</keyword>
<keyword id="KW-0645">Protease</keyword>
<keyword id="KW-0647">Proteasome</keyword>
<keyword id="KW-1185">Reference proteome</keyword>
<keyword id="KW-0888">Threonine protease</keyword>
<keyword id="KW-0865">Zymogen</keyword>
<reference key="1">
    <citation type="journal article" date="2007" name="Genome Res.">
        <title>Genome characteristics of facultatively symbiotic Frankia sp. strains reflect host range and host plant biogeography.</title>
        <authorList>
            <person name="Normand P."/>
            <person name="Lapierre P."/>
            <person name="Tisa L.S."/>
            <person name="Gogarten J.P."/>
            <person name="Alloisio N."/>
            <person name="Bagnarol E."/>
            <person name="Bassi C.A."/>
            <person name="Berry A.M."/>
            <person name="Bickhart D.M."/>
            <person name="Choisne N."/>
            <person name="Couloux A."/>
            <person name="Cournoyer B."/>
            <person name="Cruveiller S."/>
            <person name="Daubin V."/>
            <person name="Demange N."/>
            <person name="Francino M.P."/>
            <person name="Goltsman E."/>
            <person name="Huang Y."/>
            <person name="Kopp O.R."/>
            <person name="Labarre L."/>
            <person name="Lapidus A."/>
            <person name="Lavire C."/>
            <person name="Marechal J."/>
            <person name="Martinez M."/>
            <person name="Mastronunzio J.E."/>
            <person name="Mullin B.C."/>
            <person name="Niemann J."/>
            <person name="Pujic P."/>
            <person name="Rawnsley T."/>
            <person name="Rouy Z."/>
            <person name="Schenowitz C."/>
            <person name="Sellstedt A."/>
            <person name="Tavares F."/>
            <person name="Tomkins J.P."/>
            <person name="Vallenet D."/>
            <person name="Valverde C."/>
            <person name="Wall L.G."/>
            <person name="Wang Y."/>
            <person name="Medigue C."/>
            <person name="Benson D.R."/>
        </authorList>
    </citation>
    <scope>NUCLEOTIDE SEQUENCE [LARGE SCALE GENOMIC DNA]</scope>
    <source>
        <strain>DSM 45818 / CECT 9043 / HFP020203 / CcI3</strain>
    </source>
</reference>
<name>PSB_FRACC</name>